<organism>
    <name type="scientific">Haemophilus influenzae (strain PittGG)</name>
    <dbReference type="NCBI Taxonomy" id="374931"/>
    <lineage>
        <taxon>Bacteria</taxon>
        <taxon>Pseudomonadati</taxon>
        <taxon>Pseudomonadota</taxon>
        <taxon>Gammaproteobacteria</taxon>
        <taxon>Pasteurellales</taxon>
        <taxon>Pasteurellaceae</taxon>
        <taxon>Haemophilus</taxon>
    </lineage>
</organism>
<accession>A5UF68</accession>
<sequence>MGKIIGIDLGTTNSCVAVMDGDKARVIENAEGARTTPSIIAYTDNETLVGQPAKRQAITNPKNTLFAIKRLIGRRFESEEVQRDIKIMPFEITRADNGDAWVNVKGDKLAPPQISAEVLKKMKKTAEDFLGETVTEAVITVPAYFNDAQRQATIDAGKIAGLDVKRIINEPTAAALAFGLGSSKENQVIAVYDLGGGTFDISIIEIDNFDGEQTFEVLATGGNTHLGGEDFDNRVIDYIIDEFKKEQNIDLRNDAMALQRVKEAAEKAKIELSSAQSTEVNLPYITADATGPKHLALNITRAKLEALVEDLVASSIESLKTVLKDAGKGVSEIHDIILVGGQTRMPLVQQKVAEFFGKEARKDVNPDEAVAIGAAVQGGVLKGDVKDILLLDVTPLSLGIETMGGVMTTLIEKNTTIPTKKSQVFSTAEDNQSAVTIHVLQGERKRAADNKSLGQFNLEGINPAPRGMPQIEVTFDIDANGVINVSAKDKNTGKEQQIRIQASSGLSDEEIQQMVRDAEANADADRKFEEVVQARNQADGIAHATRKQIAEAGDVLSAADKEKIEAAVAELETAAKGEDKAEIEAKIEAVIKASEPLMQAAQAKAQQAGGEQPQQSSAKDDGVVDAEFEEVKDNK</sequence>
<feature type="chain" id="PRO_1000059572" description="Chaperone protein DnaK">
    <location>
        <begin position="1"/>
        <end position="635"/>
    </location>
</feature>
<feature type="region of interest" description="Disordered" evidence="2">
    <location>
        <begin position="599"/>
        <end position="635"/>
    </location>
</feature>
<feature type="compositionally biased region" description="Low complexity" evidence="2">
    <location>
        <begin position="599"/>
        <end position="617"/>
    </location>
</feature>
<feature type="modified residue" description="Phosphothreonine; by autocatalysis" evidence="1">
    <location>
        <position position="198"/>
    </location>
</feature>
<protein>
    <recommendedName>
        <fullName evidence="1">Chaperone protein DnaK</fullName>
    </recommendedName>
    <alternativeName>
        <fullName evidence="1">HSP70</fullName>
    </alternativeName>
    <alternativeName>
        <fullName evidence="1">Heat shock 70 kDa protein</fullName>
    </alternativeName>
    <alternativeName>
        <fullName evidence="1">Heat shock protein 70</fullName>
    </alternativeName>
</protein>
<reference key="1">
    <citation type="journal article" date="2007" name="Genome Biol.">
        <title>Characterization and modeling of the Haemophilus influenzae core and supragenomes based on the complete genomic sequences of Rd and 12 clinical nontypeable strains.</title>
        <authorList>
            <person name="Hogg J.S."/>
            <person name="Hu F.Z."/>
            <person name="Janto B."/>
            <person name="Boissy R."/>
            <person name="Hayes J."/>
            <person name="Keefe R."/>
            <person name="Post J.C."/>
            <person name="Ehrlich G.D."/>
        </authorList>
    </citation>
    <scope>NUCLEOTIDE SEQUENCE [LARGE SCALE GENOMIC DNA]</scope>
    <source>
        <strain>PittGG</strain>
    </source>
</reference>
<dbReference type="EMBL" id="CP000672">
    <property type="protein sequence ID" value="ABQ99423.1"/>
    <property type="molecule type" value="Genomic_DNA"/>
</dbReference>
<dbReference type="SMR" id="A5UF68"/>
<dbReference type="KEGG" id="hiq:CGSHiGG_01825"/>
<dbReference type="HOGENOM" id="CLU_005965_2_1_6"/>
<dbReference type="Proteomes" id="UP000001990">
    <property type="component" value="Chromosome"/>
</dbReference>
<dbReference type="GO" id="GO:0005524">
    <property type="term" value="F:ATP binding"/>
    <property type="evidence" value="ECO:0007669"/>
    <property type="project" value="UniProtKB-UniRule"/>
</dbReference>
<dbReference type="GO" id="GO:0140662">
    <property type="term" value="F:ATP-dependent protein folding chaperone"/>
    <property type="evidence" value="ECO:0007669"/>
    <property type="project" value="InterPro"/>
</dbReference>
<dbReference type="GO" id="GO:0051082">
    <property type="term" value="F:unfolded protein binding"/>
    <property type="evidence" value="ECO:0007669"/>
    <property type="project" value="InterPro"/>
</dbReference>
<dbReference type="CDD" id="cd10234">
    <property type="entry name" value="ASKHA_NBD_HSP70_DnaK-like"/>
    <property type="match status" value="1"/>
</dbReference>
<dbReference type="FunFam" id="2.60.34.10:FF:000014">
    <property type="entry name" value="Chaperone protein DnaK HSP70"/>
    <property type="match status" value="1"/>
</dbReference>
<dbReference type="FunFam" id="1.20.1270.10:FF:000001">
    <property type="entry name" value="Molecular chaperone DnaK"/>
    <property type="match status" value="1"/>
</dbReference>
<dbReference type="FunFam" id="3.30.420.40:FF:000004">
    <property type="entry name" value="Molecular chaperone DnaK"/>
    <property type="match status" value="1"/>
</dbReference>
<dbReference type="FunFam" id="3.90.640.10:FF:000003">
    <property type="entry name" value="Molecular chaperone DnaK"/>
    <property type="match status" value="1"/>
</dbReference>
<dbReference type="Gene3D" id="1.20.1270.10">
    <property type="match status" value="1"/>
</dbReference>
<dbReference type="Gene3D" id="3.30.420.40">
    <property type="match status" value="2"/>
</dbReference>
<dbReference type="Gene3D" id="3.90.640.10">
    <property type="entry name" value="Actin, Chain A, domain 4"/>
    <property type="match status" value="1"/>
</dbReference>
<dbReference type="Gene3D" id="2.60.34.10">
    <property type="entry name" value="Substrate Binding Domain Of DNAk, Chain A, domain 1"/>
    <property type="match status" value="1"/>
</dbReference>
<dbReference type="HAMAP" id="MF_00332">
    <property type="entry name" value="DnaK"/>
    <property type="match status" value="1"/>
</dbReference>
<dbReference type="InterPro" id="IPR043129">
    <property type="entry name" value="ATPase_NBD"/>
</dbReference>
<dbReference type="InterPro" id="IPR012725">
    <property type="entry name" value="Chaperone_DnaK"/>
</dbReference>
<dbReference type="InterPro" id="IPR018181">
    <property type="entry name" value="Heat_shock_70_CS"/>
</dbReference>
<dbReference type="InterPro" id="IPR029048">
    <property type="entry name" value="HSP70_C_sf"/>
</dbReference>
<dbReference type="InterPro" id="IPR029047">
    <property type="entry name" value="HSP70_peptide-bd_sf"/>
</dbReference>
<dbReference type="InterPro" id="IPR013126">
    <property type="entry name" value="Hsp_70_fam"/>
</dbReference>
<dbReference type="NCBIfam" id="NF001413">
    <property type="entry name" value="PRK00290.1"/>
    <property type="match status" value="1"/>
</dbReference>
<dbReference type="NCBIfam" id="TIGR02350">
    <property type="entry name" value="prok_dnaK"/>
    <property type="match status" value="1"/>
</dbReference>
<dbReference type="PANTHER" id="PTHR19375">
    <property type="entry name" value="HEAT SHOCK PROTEIN 70KDA"/>
    <property type="match status" value="1"/>
</dbReference>
<dbReference type="Pfam" id="PF00012">
    <property type="entry name" value="HSP70"/>
    <property type="match status" value="1"/>
</dbReference>
<dbReference type="PRINTS" id="PR00301">
    <property type="entry name" value="HEATSHOCK70"/>
</dbReference>
<dbReference type="SUPFAM" id="SSF53067">
    <property type="entry name" value="Actin-like ATPase domain"/>
    <property type="match status" value="2"/>
</dbReference>
<dbReference type="SUPFAM" id="SSF100934">
    <property type="entry name" value="Heat shock protein 70kD (HSP70), C-terminal subdomain"/>
    <property type="match status" value="1"/>
</dbReference>
<dbReference type="SUPFAM" id="SSF100920">
    <property type="entry name" value="Heat shock protein 70kD (HSP70), peptide-binding domain"/>
    <property type="match status" value="1"/>
</dbReference>
<dbReference type="PROSITE" id="PS00297">
    <property type="entry name" value="HSP70_1"/>
    <property type="match status" value="1"/>
</dbReference>
<dbReference type="PROSITE" id="PS00329">
    <property type="entry name" value="HSP70_2"/>
    <property type="match status" value="1"/>
</dbReference>
<dbReference type="PROSITE" id="PS01036">
    <property type="entry name" value="HSP70_3"/>
    <property type="match status" value="1"/>
</dbReference>
<name>DNAK_HAEIG</name>
<proteinExistence type="inferred from homology"/>
<gene>
    <name evidence="1" type="primary">dnaK</name>
    <name type="ordered locus">CGSHiGG_01825</name>
</gene>
<keyword id="KW-0067">ATP-binding</keyword>
<keyword id="KW-0143">Chaperone</keyword>
<keyword id="KW-0547">Nucleotide-binding</keyword>
<keyword id="KW-0597">Phosphoprotein</keyword>
<keyword id="KW-0346">Stress response</keyword>
<comment type="function">
    <text evidence="1">Acts as a chaperone.</text>
</comment>
<comment type="induction">
    <text evidence="1">By stress conditions e.g. heat shock.</text>
</comment>
<comment type="similarity">
    <text evidence="1">Belongs to the heat shock protein 70 family.</text>
</comment>
<evidence type="ECO:0000255" key="1">
    <source>
        <dbReference type="HAMAP-Rule" id="MF_00332"/>
    </source>
</evidence>
<evidence type="ECO:0000256" key="2">
    <source>
        <dbReference type="SAM" id="MobiDB-lite"/>
    </source>
</evidence>